<protein>
    <recommendedName>
        <fullName evidence="1">Biotin synthase</fullName>
        <ecNumber evidence="1">2.8.1.6</ecNumber>
    </recommendedName>
</protein>
<dbReference type="EC" id="2.8.1.6" evidence="1"/>
<dbReference type="EMBL" id="CP000958">
    <property type="protein sequence ID" value="ACA92107.1"/>
    <property type="molecule type" value="Genomic_DNA"/>
</dbReference>
<dbReference type="RefSeq" id="WP_006477646.1">
    <property type="nucleotide sequence ID" value="NC_010508.1"/>
</dbReference>
<dbReference type="SMR" id="B1JZE1"/>
<dbReference type="GeneID" id="83049729"/>
<dbReference type="KEGG" id="bcm:Bcenmc03_2949"/>
<dbReference type="HOGENOM" id="CLU_033172_1_2_4"/>
<dbReference type="UniPathway" id="UPA00078">
    <property type="reaction ID" value="UER00162"/>
</dbReference>
<dbReference type="Proteomes" id="UP000002169">
    <property type="component" value="Chromosome 1"/>
</dbReference>
<dbReference type="GO" id="GO:0051537">
    <property type="term" value="F:2 iron, 2 sulfur cluster binding"/>
    <property type="evidence" value="ECO:0007669"/>
    <property type="project" value="UniProtKB-KW"/>
</dbReference>
<dbReference type="GO" id="GO:0051539">
    <property type="term" value="F:4 iron, 4 sulfur cluster binding"/>
    <property type="evidence" value="ECO:0007669"/>
    <property type="project" value="UniProtKB-KW"/>
</dbReference>
<dbReference type="GO" id="GO:0004076">
    <property type="term" value="F:biotin synthase activity"/>
    <property type="evidence" value="ECO:0007669"/>
    <property type="project" value="UniProtKB-UniRule"/>
</dbReference>
<dbReference type="GO" id="GO:0005506">
    <property type="term" value="F:iron ion binding"/>
    <property type="evidence" value="ECO:0007669"/>
    <property type="project" value="UniProtKB-UniRule"/>
</dbReference>
<dbReference type="GO" id="GO:0009102">
    <property type="term" value="P:biotin biosynthetic process"/>
    <property type="evidence" value="ECO:0007669"/>
    <property type="project" value="UniProtKB-UniRule"/>
</dbReference>
<dbReference type="CDD" id="cd01335">
    <property type="entry name" value="Radical_SAM"/>
    <property type="match status" value="1"/>
</dbReference>
<dbReference type="FunFam" id="3.20.20.70:FF:000011">
    <property type="entry name" value="Biotin synthase"/>
    <property type="match status" value="1"/>
</dbReference>
<dbReference type="Gene3D" id="3.20.20.70">
    <property type="entry name" value="Aldolase class I"/>
    <property type="match status" value="1"/>
</dbReference>
<dbReference type="HAMAP" id="MF_01694">
    <property type="entry name" value="BioB"/>
    <property type="match status" value="1"/>
</dbReference>
<dbReference type="InterPro" id="IPR013785">
    <property type="entry name" value="Aldolase_TIM"/>
</dbReference>
<dbReference type="InterPro" id="IPR010722">
    <property type="entry name" value="BATS_dom"/>
</dbReference>
<dbReference type="InterPro" id="IPR002684">
    <property type="entry name" value="Biotin_synth/BioAB"/>
</dbReference>
<dbReference type="InterPro" id="IPR024177">
    <property type="entry name" value="Biotin_synthase"/>
</dbReference>
<dbReference type="InterPro" id="IPR006638">
    <property type="entry name" value="Elp3/MiaA/NifB-like_rSAM"/>
</dbReference>
<dbReference type="InterPro" id="IPR007197">
    <property type="entry name" value="rSAM"/>
</dbReference>
<dbReference type="NCBIfam" id="TIGR00433">
    <property type="entry name" value="bioB"/>
    <property type="match status" value="1"/>
</dbReference>
<dbReference type="PANTHER" id="PTHR22976">
    <property type="entry name" value="BIOTIN SYNTHASE"/>
    <property type="match status" value="1"/>
</dbReference>
<dbReference type="PANTHER" id="PTHR22976:SF2">
    <property type="entry name" value="BIOTIN SYNTHASE, MITOCHONDRIAL"/>
    <property type="match status" value="1"/>
</dbReference>
<dbReference type="Pfam" id="PF06968">
    <property type="entry name" value="BATS"/>
    <property type="match status" value="1"/>
</dbReference>
<dbReference type="Pfam" id="PF04055">
    <property type="entry name" value="Radical_SAM"/>
    <property type="match status" value="1"/>
</dbReference>
<dbReference type="PIRSF" id="PIRSF001619">
    <property type="entry name" value="Biotin_synth"/>
    <property type="match status" value="1"/>
</dbReference>
<dbReference type="SFLD" id="SFLDF00272">
    <property type="entry name" value="biotin_synthase"/>
    <property type="match status" value="1"/>
</dbReference>
<dbReference type="SFLD" id="SFLDG01278">
    <property type="entry name" value="biotin_synthase_like"/>
    <property type="match status" value="1"/>
</dbReference>
<dbReference type="SMART" id="SM00876">
    <property type="entry name" value="BATS"/>
    <property type="match status" value="1"/>
</dbReference>
<dbReference type="SMART" id="SM00729">
    <property type="entry name" value="Elp3"/>
    <property type="match status" value="1"/>
</dbReference>
<dbReference type="SUPFAM" id="SSF102114">
    <property type="entry name" value="Radical SAM enzymes"/>
    <property type="match status" value="1"/>
</dbReference>
<dbReference type="PROSITE" id="PS51918">
    <property type="entry name" value="RADICAL_SAM"/>
    <property type="match status" value="1"/>
</dbReference>
<evidence type="ECO:0000255" key="1">
    <source>
        <dbReference type="HAMAP-Rule" id="MF_01694"/>
    </source>
</evidence>
<evidence type="ECO:0000255" key="2">
    <source>
        <dbReference type="PROSITE-ProRule" id="PRU01266"/>
    </source>
</evidence>
<keyword id="KW-0001">2Fe-2S</keyword>
<keyword id="KW-0004">4Fe-4S</keyword>
<keyword id="KW-0093">Biotin biosynthesis</keyword>
<keyword id="KW-0408">Iron</keyword>
<keyword id="KW-0411">Iron-sulfur</keyword>
<keyword id="KW-0479">Metal-binding</keyword>
<keyword id="KW-0949">S-adenosyl-L-methionine</keyword>
<keyword id="KW-0808">Transferase</keyword>
<gene>
    <name evidence="1" type="primary">bioB</name>
    <name type="ordered locus">Bcenmc03_2949</name>
</gene>
<organism>
    <name type="scientific">Burkholderia orbicola (strain MC0-3)</name>
    <dbReference type="NCBI Taxonomy" id="406425"/>
    <lineage>
        <taxon>Bacteria</taxon>
        <taxon>Pseudomonadati</taxon>
        <taxon>Pseudomonadota</taxon>
        <taxon>Betaproteobacteria</taxon>
        <taxon>Burkholderiales</taxon>
        <taxon>Burkholderiaceae</taxon>
        <taxon>Burkholderia</taxon>
        <taxon>Burkholderia cepacia complex</taxon>
        <taxon>Burkholderia orbicola</taxon>
    </lineage>
</organism>
<feature type="chain" id="PRO_0000381260" description="Biotin synthase">
    <location>
        <begin position="1"/>
        <end position="339"/>
    </location>
</feature>
<feature type="domain" description="Radical SAM core" evidence="2">
    <location>
        <begin position="55"/>
        <end position="282"/>
    </location>
</feature>
<feature type="binding site" evidence="1">
    <location>
        <position position="70"/>
    </location>
    <ligand>
        <name>[4Fe-4S] cluster</name>
        <dbReference type="ChEBI" id="CHEBI:49883"/>
        <note>4Fe-4S-S-AdoMet</note>
    </ligand>
</feature>
<feature type="binding site" evidence="1">
    <location>
        <position position="74"/>
    </location>
    <ligand>
        <name>[4Fe-4S] cluster</name>
        <dbReference type="ChEBI" id="CHEBI:49883"/>
        <note>4Fe-4S-S-AdoMet</note>
    </ligand>
</feature>
<feature type="binding site" evidence="1">
    <location>
        <position position="77"/>
    </location>
    <ligand>
        <name>[4Fe-4S] cluster</name>
        <dbReference type="ChEBI" id="CHEBI:49883"/>
        <note>4Fe-4S-S-AdoMet</note>
    </ligand>
</feature>
<feature type="binding site" evidence="1">
    <location>
        <position position="114"/>
    </location>
    <ligand>
        <name>[2Fe-2S] cluster</name>
        <dbReference type="ChEBI" id="CHEBI:190135"/>
    </ligand>
</feature>
<feature type="binding site" evidence="1">
    <location>
        <position position="145"/>
    </location>
    <ligand>
        <name>[2Fe-2S] cluster</name>
        <dbReference type="ChEBI" id="CHEBI:190135"/>
    </ligand>
</feature>
<feature type="binding site" evidence="1">
    <location>
        <position position="205"/>
    </location>
    <ligand>
        <name>[2Fe-2S] cluster</name>
        <dbReference type="ChEBI" id="CHEBI:190135"/>
    </ligand>
</feature>
<feature type="binding site" evidence="1">
    <location>
        <position position="277"/>
    </location>
    <ligand>
        <name>[2Fe-2S] cluster</name>
        <dbReference type="ChEBI" id="CHEBI:190135"/>
    </ligand>
</feature>
<comment type="function">
    <text evidence="1">Catalyzes the conversion of dethiobiotin (DTB) to biotin by the insertion of a sulfur atom into dethiobiotin via a radical-based mechanism.</text>
</comment>
<comment type="catalytic activity">
    <reaction evidence="1">
        <text>(4R,5S)-dethiobiotin + (sulfur carrier)-SH + 2 reduced [2Fe-2S]-[ferredoxin] + 2 S-adenosyl-L-methionine = (sulfur carrier)-H + biotin + 2 5'-deoxyadenosine + 2 L-methionine + 2 oxidized [2Fe-2S]-[ferredoxin]</text>
        <dbReference type="Rhea" id="RHEA:22060"/>
        <dbReference type="Rhea" id="RHEA-COMP:10000"/>
        <dbReference type="Rhea" id="RHEA-COMP:10001"/>
        <dbReference type="Rhea" id="RHEA-COMP:14737"/>
        <dbReference type="Rhea" id="RHEA-COMP:14739"/>
        <dbReference type="ChEBI" id="CHEBI:17319"/>
        <dbReference type="ChEBI" id="CHEBI:29917"/>
        <dbReference type="ChEBI" id="CHEBI:33737"/>
        <dbReference type="ChEBI" id="CHEBI:33738"/>
        <dbReference type="ChEBI" id="CHEBI:57586"/>
        <dbReference type="ChEBI" id="CHEBI:57844"/>
        <dbReference type="ChEBI" id="CHEBI:59789"/>
        <dbReference type="ChEBI" id="CHEBI:64428"/>
        <dbReference type="ChEBI" id="CHEBI:149473"/>
        <dbReference type="EC" id="2.8.1.6"/>
    </reaction>
</comment>
<comment type="cofactor">
    <cofactor evidence="1">
        <name>[4Fe-4S] cluster</name>
        <dbReference type="ChEBI" id="CHEBI:49883"/>
    </cofactor>
    <text evidence="1">Binds 1 [4Fe-4S] cluster. The cluster is coordinated with 3 cysteines and an exchangeable S-adenosyl-L-methionine.</text>
</comment>
<comment type="cofactor">
    <cofactor evidence="1">
        <name>[2Fe-2S] cluster</name>
        <dbReference type="ChEBI" id="CHEBI:190135"/>
    </cofactor>
    <text evidence="1">Binds 1 [2Fe-2S] cluster. The cluster is coordinated with 3 cysteines and 1 arginine.</text>
</comment>
<comment type="pathway">
    <text evidence="1">Cofactor biosynthesis; biotin biosynthesis; biotin from 7,8-diaminononanoate: step 2/2.</text>
</comment>
<comment type="subunit">
    <text evidence="1">Homodimer.</text>
</comment>
<comment type="similarity">
    <text evidence="1">Belongs to the radical SAM superfamily. Biotin synthase family.</text>
</comment>
<proteinExistence type="inferred from homology"/>
<name>BIOB_BURO0</name>
<reference key="1">
    <citation type="submission" date="2008-02" db="EMBL/GenBank/DDBJ databases">
        <title>Complete sequence of chromosome 1 of Burkholderia cenocepacia MC0-3.</title>
        <authorList>
            <person name="Copeland A."/>
            <person name="Lucas S."/>
            <person name="Lapidus A."/>
            <person name="Barry K."/>
            <person name="Bruce D."/>
            <person name="Goodwin L."/>
            <person name="Glavina del Rio T."/>
            <person name="Dalin E."/>
            <person name="Tice H."/>
            <person name="Pitluck S."/>
            <person name="Chain P."/>
            <person name="Malfatti S."/>
            <person name="Shin M."/>
            <person name="Vergez L."/>
            <person name="Schmutz J."/>
            <person name="Larimer F."/>
            <person name="Land M."/>
            <person name="Hauser L."/>
            <person name="Kyrpides N."/>
            <person name="Mikhailova N."/>
            <person name="Tiedje J."/>
            <person name="Richardson P."/>
        </authorList>
    </citation>
    <scope>NUCLEOTIDE SEQUENCE [LARGE SCALE GENOMIC DNA]</scope>
    <source>
        <strain>MC0-3</strain>
    </source>
</reference>
<sequence length="339" mass="37014">MTQAQTAAVQPAAIPVAAPASQRWRVADVVALFELPFNDLMFRAQQVHREHFDANAVQLSTLLSIKTGGCEEDCGYCSQSSHHDTGLKAEKLMDVDTVLDAARAAKANGASRFCMGAAWRNPKERHMPALTEMVRGVKELGLETCMTLGMLEDEQAQQLADAGLDYYNHNLDTSPEFYGQVISTRTYQDRLDTLDRVRDAGINVCCGGIIGMGESRRERAGLISQLANLNPYPESVPINNLVAIEGTPLEGTAPLDPFEFVRTIAVARITMPKAVVRLSAGREQLDDAMQAMCFLAGANSMFYGDQLLTTSNPQTQRDRALFERLGIRASQADALSDNA</sequence>
<accession>B1JZE1</accession>